<reference key="1">
    <citation type="journal article" date="2008" name="DNA Res.">
        <title>Determination of the genome sequence of Porphyromonas gingivalis strain ATCC 33277 and genomic comparison with strain W83 revealed extensive genome rearrangements in P. gingivalis.</title>
        <authorList>
            <person name="Naito M."/>
            <person name="Hirakawa H."/>
            <person name="Yamashita A."/>
            <person name="Ohara N."/>
            <person name="Shoji M."/>
            <person name="Yukitake H."/>
            <person name="Nakayama K."/>
            <person name="Toh H."/>
            <person name="Yoshimura F."/>
            <person name="Kuhara S."/>
            <person name="Hattori M."/>
            <person name="Hayashi T."/>
            <person name="Nakayama K."/>
        </authorList>
    </citation>
    <scope>NUCLEOTIDE SEQUENCE [LARGE SCALE GENOMIC DNA]</scope>
    <source>
        <strain>ATCC 33277 / DSM 20709 / CIP 103683 / JCM 12257 / NCTC 11834 / 2561</strain>
    </source>
</reference>
<comment type="function">
    <text evidence="1">Required for maturation of 30S ribosomal subunits.</text>
</comment>
<comment type="subcellular location">
    <subcellularLocation>
        <location evidence="1">Cytoplasm</location>
    </subcellularLocation>
</comment>
<comment type="similarity">
    <text evidence="1">Belongs to the RimP family.</text>
</comment>
<dbReference type="EMBL" id="AP009380">
    <property type="protein sequence ID" value="BAG32872.1"/>
    <property type="molecule type" value="Genomic_DNA"/>
</dbReference>
<dbReference type="RefSeq" id="WP_012457446.1">
    <property type="nucleotide sequence ID" value="NC_010729.1"/>
</dbReference>
<dbReference type="SMR" id="B2RHM7"/>
<dbReference type="GeneID" id="29255595"/>
<dbReference type="KEGG" id="pgn:PGN_0353"/>
<dbReference type="eggNOG" id="COG0779">
    <property type="taxonomic scope" value="Bacteria"/>
</dbReference>
<dbReference type="HOGENOM" id="CLU_070525_3_1_10"/>
<dbReference type="OrthoDB" id="9789702at2"/>
<dbReference type="BioCyc" id="PGIN431947:G1G2V-389-MONOMER"/>
<dbReference type="Proteomes" id="UP000008842">
    <property type="component" value="Chromosome"/>
</dbReference>
<dbReference type="GO" id="GO:0005829">
    <property type="term" value="C:cytosol"/>
    <property type="evidence" value="ECO:0007669"/>
    <property type="project" value="TreeGrafter"/>
</dbReference>
<dbReference type="GO" id="GO:0000028">
    <property type="term" value="P:ribosomal small subunit assembly"/>
    <property type="evidence" value="ECO:0007669"/>
    <property type="project" value="TreeGrafter"/>
</dbReference>
<dbReference type="GO" id="GO:0006412">
    <property type="term" value="P:translation"/>
    <property type="evidence" value="ECO:0007669"/>
    <property type="project" value="TreeGrafter"/>
</dbReference>
<dbReference type="Gene3D" id="3.30.300.70">
    <property type="entry name" value="RimP-like superfamily, N-terminal"/>
    <property type="match status" value="1"/>
</dbReference>
<dbReference type="HAMAP" id="MF_01077">
    <property type="entry name" value="RimP"/>
    <property type="match status" value="1"/>
</dbReference>
<dbReference type="InterPro" id="IPR003728">
    <property type="entry name" value="Ribosome_maturation_RimP"/>
</dbReference>
<dbReference type="InterPro" id="IPR028989">
    <property type="entry name" value="RimP_N"/>
</dbReference>
<dbReference type="InterPro" id="IPR035956">
    <property type="entry name" value="RimP_N_sf"/>
</dbReference>
<dbReference type="NCBIfam" id="NF002531">
    <property type="entry name" value="PRK02001.1"/>
    <property type="match status" value="1"/>
</dbReference>
<dbReference type="PANTHER" id="PTHR33867">
    <property type="entry name" value="RIBOSOME MATURATION FACTOR RIMP"/>
    <property type="match status" value="1"/>
</dbReference>
<dbReference type="PANTHER" id="PTHR33867:SF1">
    <property type="entry name" value="RIBOSOME MATURATION FACTOR RIMP"/>
    <property type="match status" value="1"/>
</dbReference>
<dbReference type="Pfam" id="PF02576">
    <property type="entry name" value="RimP_N"/>
    <property type="match status" value="1"/>
</dbReference>
<dbReference type="SUPFAM" id="SSF75420">
    <property type="entry name" value="YhbC-like, N-terminal domain"/>
    <property type="match status" value="1"/>
</dbReference>
<organism>
    <name type="scientific">Porphyromonas gingivalis (strain ATCC 33277 / DSM 20709 / CIP 103683 / JCM 12257 / NCTC 11834 / 2561)</name>
    <dbReference type="NCBI Taxonomy" id="431947"/>
    <lineage>
        <taxon>Bacteria</taxon>
        <taxon>Pseudomonadati</taxon>
        <taxon>Bacteroidota</taxon>
        <taxon>Bacteroidia</taxon>
        <taxon>Bacteroidales</taxon>
        <taxon>Porphyromonadaceae</taxon>
        <taxon>Porphyromonas</taxon>
    </lineage>
</organism>
<keyword id="KW-0963">Cytoplasm</keyword>
<keyword id="KW-0690">Ribosome biogenesis</keyword>
<proteinExistence type="inferred from homology"/>
<accession>B2RHM7</accession>
<protein>
    <recommendedName>
        <fullName evidence="1">Ribosome maturation factor RimP</fullName>
    </recommendedName>
</protein>
<feature type="chain" id="PRO_0000384732" description="Ribosome maturation factor RimP">
    <location>
        <begin position="1"/>
        <end position="152"/>
    </location>
</feature>
<evidence type="ECO:0000255" key="1">
    <source>
        <dbReference type="HAMAP-Rule" id="MF_01077"/>
    </source>
</evidence>
<name>RIMP_PORG3</name>
<gene>
    <name evidence="1" type="primary">rimP</name>
    <name type="ordered locus">PGN_0353</name>
</gene>
<sequence length="152" mass="17018">MIDREQIVRIVSDYLSTGETFLVEVAIHPGNRILVELDSAQGVCIDECVALSRHIESQVDRDLEDYELEVGSTGLTSPLKVMRQWENCIDSELSVLLTNGMKETGRLITVAPEAIKLEVVRMVKPEGAKRKKPETQELTIVMADIKQAVRII</sequence>